<accession>A4TBU4</accession>
<keyword id="KW-0030">Aminoacyl-tRNA synthetase</keyword>
<keyword id="KW-0067">ATP-binding</keyword>
<keyword id="KW-0963">Cytoplasm</keyword>
<keyword id="KW-0436">Ligase</keyword>
<keyword id="KW-0547">Nucleotide-binding</keyword>
<keyword id="KW-0648">Protein biosynthesis</keyword>
<feature type="chain" id="PRO_1000074710" description="Aspartate--tRNA(Asp/Asn) ligase">
    <location>
        <begin position="1"/>
        <end position="590"/>
    </location>
</feature>
<feature type="region of interest" description="Aspartate" evidence="1">
    <location>
        <begin position="194"/>
        <end position="197"/>
    </location>
</feature>
<feature type="region of interest" description="Disordered" evidence="2">
    <location>
        <begin position="559"/>
        <end position="590"/>
    </location>
</feature>
<feature type="compositionally biased region" description="Basic and acidic residues" evidence="2">
    <location>
        <begin position="575"/>
        <end position="590"/>
    </location>
</feature>
<feature type="binding site" evidence="1">
    <location>
        <position position="170"/>
    </location>
    <ligand>
        <name>L-aspartate</name>
        <dbReference type="ChEBI" id="CHEBI:29991"/>
    </ligand>
</feature>
<feature type="binding site" evidence="1">
    <location>
        <begin position="216"/>
        <end position="218"/>
    </location>
    <ligand>
        <name>ATP</name>
        <dbReference type="ChEBI" id="CHEBI:30616"/>
    </ligand>
</feature>
<feature type="binding site" evidence="1">
    <location>
        <position position="216"/>
    </location>
    <ligand>
        <name>L-aspartate</name>
        <dbReference type="ChEBI" id="CHEBI:29991"/>
    </ligand>
</feature>
<feature type="binding site" evidence="1">
    <location>
        <position position="225"/>
    </location>
    <ligand>
        <name>ATP</name>
        <dbReference type="ChEBI" id="CHEBI:30616"/>
    </ligand>
</feature>
<feature type="binding site" evidence="1">
    <location>
        <position position="448"/>
    </location>
    <ligand>
        <name>L-aspartate</name>
        <dbReference type="ChEBI" id="CHEBI:29991"/>
    </ligand>
</feature>
<feature type="binding site" evidence="1">
    <location>
        <position position="482"/>
    </location>
    <ligand>
        <name>ATP</name>
        <dbReference type="ChEBI" id="CHEBI:30616"/>
    </ligand>
</feature>
<feature type="binding site" evidence="1">
    <location>
        <position position="489"/>
    </location>
    <ligand>
        <name>L-aspartate</name>
        <dbReference type="ChEBI" id="CHEBI:29991"/>
    </ligand>
</feature>
<feature type="binding site" evidence="1">
    <location>
        <begin position="534"/>
        <end position="537"/>
    </location>
    <ligand>
        <name>ATP</name>
        <dbReference type="ChEBI" id="CHEBI:30616"/>
    </ligand>
</feature>
<feature type="site" description="Important for tRNA non-discrimination" evidence="1">
    <location>
        <position position="31"/>
    </location>
</feature>
<feature type="site" description="Important for tRNA non-discrimination" evidence="1">
    <location>
        <position position="80"/>
    </location>
</feature>
<organism>
    <name type="scientific">Mycolicibacterium gilvum (strain PYR-GCK)</name>
    <name type="common">Mycobacterium gilvum (strain PYR-GCK)</name>
    <dbReference type="NCBI Taxonomy" id="350054"/>
    <lineage>
        <taxon>Bacteria</taxon>
        <taxon>Bacillati</taxon>
        <taxon>Actinomycetota</taxon>
        <taxon>Actinomycetes</taxon>
        <taxon>Mycobacteriales</taxon>
        <taxon>Mycobacteriaceae</taxon>
        <taxon>Mycolicibacterium</taxon>
    </lineage>
</organism>
<comment type="function">
    <text evidence="1">Aspartyl-tRNA synthetase with relaxed tRNA specificity since it is able to aspartylate not only its cognate tRNA(Asp) but also tRNA(Asn). Reaction proceeds in two steps: L-aspartate is first activated by ATP to form Asp-AMP and then transferred to the acceptor end of tRNA(Asp/Asn).</text>
</comment>
<comment type="catalytic activity">
    <reaction evidence="1">
        <text>tRNA(Asx) + L-aspartate + ATP = L-aspartyl-tRNA(Asx) + AMP + diphosphate</text>
        <dbReference type="Rhea" id="RHEA:18349"/>
        <dbReference type="Rhea" id="RHEA-COMP:9710"/>
        <dbReference type="Rhea" id="RHEA-COMP:9711"/>
        <dbReference type="ChEBI" id="CHEBI:29991"/>
        <dbReference type="ChEBI" id="CHEBI:30616"/>
        <dbReference type="ChEBI" id="CHEBI:33019"/>
        <dbReference type="ChEBI" id="CHEBI:78442"/>
        <dbReference type="ChEBI" id="CHEBI:78516"/>
        <dbReference type="ChEBI" id="CHEBI:456215"/>
        <dbReference type="EC" id="6.1.1.23"/>
    </reaction>
</comment>
<comment type="subunit">
    <text evidence="1">Homodimer.</text>
</comment>
<comment type="subcellular location">
    <subcellularLocation>
        <location evidence="1">Cytoplasm</location>
    </subcellularLocation>
</comment>
<comment type="similarity">
    <text evidence="1">Belongs to the class-II aminoacyl-tRNA synthetase family. Type 1 subfamily.</text>
</comment>
<protein>
    <recommendedName>
        <fullName evidence="1">Aspartate--tRNA(Asp/Asn) ligase</fullName>
        <ecNumber evidence="1">6.1.1.23</ecNumber>
    </recommendedName>
    <alternativeName>
        <fullName evidence="1">Aspartyl-tRNA synthetase</fullName>
        <shortName evidence="1">AspRS</shortName>
    </alternativeName>
    <alternativeName>
        <fullName evidence="1">Non-discriminating aspartyl-tRNA synthetase</fullName>
        <shortName evidence="1">ND-AspRS</shortName>
    </alternativeName>
</protein>
<gene>
    <name evidence="1" type="primary">aspS</name>
    <name type="ordered locus">Mflv_3785</name>
</gene>
<sequence length="590" mass="63882">MLRTRTAGSLRPADAGQTVTLAGWVARRRDHGGVIFIDLRDASGVSQVVFRDGAVLEQAHRLRSEFCVAVTGVVEIRPEGNANADIPTGEVEVNATSLTVLGESAALPFQLDETAGEEARLKYRYLDLRREVPGNAIRLRSKVNAAARGVLAGHDFVEIETPTLTRSTPEGARDFLVPARLQPGSFYALPQSPQLFKQLLMVAGMERYYQIARCYRDEDFRADRQPEFTQLDMEMSFVDADDVMALSEEVLRAVWATIGYDLPLPLPRISYADAMRRFGSDKPDLRFGLELVECTEYFADTPFRVFQAPYVGAVVMPGGASQPRRTLDGWQEFAKQRGHKGLAYVLVGKDGELTGPVAKNLTDAERAGLTAHVGANPGDCVFFAAGTAKSARALLGATRIEVAKRLDLIDPDAWAFTWVVDWPMFESAAEATASGDVAVGSGAWTAMHHAFTAPTPESEATFDTDPGSALSNAYDIVCNGNEIGGGSLRIHRRDVQERVFAMMGISQEEAEDKFGFLLEAFTFGAPPHGGIAFGWDRIVALLAGLDSIREVIAFPKSGGGVDPLTEAPAPITAQQRKESGIDAKPGKDGA</sequence>
<reference key="1">
    <citation type="submission" date="2007-04" db="EMBL/GenBank/DDBJ databases">
        <title>Complete sequence of chromosome of Mycobacterium gilvum PYR-GCK.</title>
        <authorList>
            <consortium name="US DOE Joint Genome Institute"/>
            <person name="Copeland A."/>
            <person name="Lucas S."/>
            <person name="Lapidus A."/>
            <person name="Barry K."/>
            <person name="Detter J.C."/>
            <person name="Glavina del Rio T."/>
            <person name="Hammon N."/>
            <person name="Israni S."/>
            <person name="Dalin E."/>
            <person name="Tice H."/>
            <person name="Pitluck S."/>
            <person name="Chain P."/>
            <person name="Malfatti S."/>
            <person name="Shin M."/>
            <person name="Vergez L."/>
            <person name="Schmutz J."/>
            <person name="Larimer F."/>
            <person name="Land M."/>
            <person name="Hauser L."/>
            <person name="Kyrpides N."/>
            <person name="Mikhailova N."/>
            <person name="Miller C."/>
            <person name="Richardson P."/>
        </authorList>
    </citation>
    <scope>NUCLEOTIDE SEQUENCE [LARGE SCALE GENOMIC DNA]</scope>
    <source>
        <strain>PYR-GCK</strain>
    </source>
</reference>
<dbReference type="EC" id="6.1.1.23" evidence="1"/>
<dbReference type="EMBL" id="CP000656">
    <property type="protein sequence ID" value="ABP46257.1"/>
    <property type="molecule type" value="Genomic_DNA"/>
</dbReference>
<dbReference type="SMR" id="A4TBU4"/>
<dbReference type="STRING" id="350054.Mflv_3785"/>
<dbReference type="KEGG" id="mgi:Mflv_3785"/>
<dbReference type="eggNOG" id="COG0173">
    <property type="taxonomic scope" value="Bacteria"/>
</dbReference>
<dbReference type="HOGENOM" id="CLU_014330_3_2_11"/>
<dbReference type="OrthoDB" id="9802326at2"/>
<dbReference type="GO" id="GO:0005737">
    <property type="term" value="C:cytoplasm"/>
    <property type="evidence" value="ECO:0007669"/>
    <property type="project" value="UniProtKB-SubCell"/>
</dbReference>
<dbReference type="GO" id="GO:0004815">
    <property type="term" value="F:aspartate-tRNA ligase activity"/>
    <property type="evidence" value="ECO:0007669"/>
    <property type="project" value="UniProtKB-UniRule"/>
</dbReference>
<dbReference type="GO" id="GO:0050560">
    <property type="term" value="F:aspartate-tRNA(Asn) ligase activity"/>
    <property type="evidence" value="ECO:0007669"/>
    <property type="project" value="UniProtKB-EC"/>
</dbReference>
<dbReference type="GO" id="GO:0005524">
    <property type="term" value="F:ATP binding"/>
    <property type="evidence" value="ECO:0007669"/>
    <property type="project" value="UniProtKB-UniRule"/>
</dbReference>
<dbReference type="GO" id="GO:0003676">
    <property type="term" value="F:nucleic acid binding"/>
    <property type="evidence" value="ECO:0007669"/>
    <property type="project" value="InterPro"/>
</dbReference>
<dbReference type="GO" id="GO:0006422">
    <property type="term" value="P:aspartyl-tRNA aminoacylation"/>
    <property type="evidence" value="ECO:0007669"/>
    <property type="project" value="UniProtKB-UniRule"/>
</dbReference>
<dbReference type="CDD" id="cd00777">
    <property type="entry name" value="AspRS_core"/>
    <property type="match status" value="1"/>
</dbReference>
<dbReference type="CDD" id="cd04317">
    <property type="entry name" value="EcAspRS_like_N"/>
    <property type="match status" value="1"/>
</dbReference>
<dbReference type="Gene3D" id="3.30.930.10">
    <property type="entry name" value="Bira Bifunctional Protein, Domain 2"/>
    <property type="match status" value="1"/>
</dbReference>
<dbReference type="Gene3D" id="3.30.1360.30">
    <property type="entry name" value="GAD-like domain"/>
    <property type="match status" value="1"/>
</dbReference>
<dbReference type="Gene3D" id="2.40.50.140">
    <property type="entry name" value="Nucleic acid-binding proteins"/>
    <property type="match status" value="1"/>
</dbReference>
<dbReference type="HAMAP" id="MF_00044">
    <property type="entry name" value="Asp_tRNA_synth_type1"/>
    <property type="match status" value="1"/>
</dbReference>
<dbReference type="InterPro" id="IPR004364">
    <property type="entry name" value="Aa-tRNA-synt_II"/>
</dbReference>
<dbReference type="InterPro" id="IPR006195">
    <property type="entry name" value="aa-tRNA-synth_II"/>
</dbReference>
<dbReference type="InterPro" id="IPR045864">
    <property type="entry name" value="aa-tRNA-synth_II/BPL/LPL"/>
</dbReference>
<dbReference type="InterPro" id="IPR004524">
    <property type="entry name" value="Asp-tRNA-ligase_1"/>
</dbReference>
<dbReference type="InterPro" id="IPR047089">
    <property type="entry name" value="Asp-tRNA-ligase_1_N"/>
</dbReference>
<dbReference type="InterPro" id="IPR002312">
    <property type="entry name" value="Asp/Asn-tRNA-synth_IIb"/>
</dbReference>
<dbReference type="InterPro" id="IPR047090">
    <property type="entry name" value="AspRS_core"/>
</dbReference>
<dbReference type="InterPro" id="IPR004115">
    <property type="entry name" value="GAD-like_sf"/>
</dbReference>
<dbReference type="InterPro" id="IPR029351">
    <property type="entry name" value="GAD_dom"/>
</dbReference>
<dbReference type="InterPro" id="IPR012340">
    <property type="entry name" value="NA-bd_OB-fold"/>
</dbReference>
<dbReference type="InterPro" id="IPR004365">
    <property type="entry name" value="NA-bd_OB_tRNA"/>
</dbReference>
<dbReference type="NCBIfam" id="TIGR00459">
    <property type="entry name" value="aspS_bact"/>
    <property type="match status" value="1"/>
</dbReference>
<dbReference type="NCBIfam" id="NF001750">
    <property type="entry name" value="PRK00476.1"/>
    <property type="match status" value="1"/>
</dbReference>
<dbReference type="PANTHER" id="PTHR22594:SF5">
    <property type="entry name" value="ASPARTATE--TRNA LIGASE, MITOCHONDRIAL"/>
    <property type="match status" value="1"/>
</dbReference>
<dbReference type="PANTHER" id="PTHR22594">
    <property type="entry name" value="ASPARTYL/LYSYL-TRNA SYNTHETASE"/>
    <property type="match status" value="1"/>
</dbReference>
<dbReference type="Pfam" id="PF02938">
    <property type="entry name" value="GAD"/>
    <property type="match status" value="1"/>
</dbReference>
<dbReference type="Pfam" id="PF00152">
    <property type="entry name" value="tRNA-synt_2"/>
    <property type="match status" value="1"/>
</dbReference>
<dbReference type="Pfam" id="PF01336">
    <property type="entry name" value="tRNA_anti-codon"/>
    <property type="match status" value="1"/>
</dbReference>
<dbReference type="PRINTS" id="PR01042">
    <property type="entry name" value="TRNASYNTHASP"/>
</dbReference>
<dbReference type="SUPFAM" id="SSF55681">
    <property type="entry name" value="Class II aaRS and biotin synthetases"/>
    <property type="match status" value="1"/>
</dbReference>
<dbReference type="SUPFAM" id="SSF55261">
    <property type="entry name" value="GAD domain-like"/>
    <property type="match status" value="1"/>
</dbReference>
<dbReference type="SUPFAM" id="SSF50249">
    <property type="entry name" value="Nucleic acid-binding proteins"/>
    <property type="match status" value="1"/>
</dbReference>
<dbReference type="PROSITE" id="PS50862">
    <property type="entry name" value="AA_TRNA_LIGASE_II"/>
    <property type="match status" value="1"/>
</dbReference>
<evidence type="ECO:0000255" key="1">
    <source>
        <dbReference type="HAMAP-Rule" id="MF_00044"/>
    </source>
</evidence>
<evidence type="ECO:0000256" key="2">
    <source>
        <dbReference type="SAM" id="MobiDB-lite"/>
    </source>
</evidence>
<proteinExistence type="inferred from homology"/>
<name>SYDND_MYCGI</name>